<protein>
    <recommendedName>
        <fullName evidence="3">Trans-3-hydroxy-L-proline dehydratase</fullName>
        <shortName evidence="3">T3LHyp dehydratase</shortName>
        <shortName>t3HypD</shortName>
        <ecNumber evidence="2">4.2.1.77</ecNumber>
    </recommendedName>
    <alternativeName>
        <fullName>Trans-L-3-hydroxyproline dehydratase</fullName>
    </alternativeName>
</protein>
<proteinExistence type="evidence at protein level"/>
<accession>V5YXI5</accession>
<feature type="chain" id="PRO_0000432241" description="Trans-3-hydroxy-L-proline dehydratase">
    <location>
        <begin position="1"/>
        <end position="335"/>
    </location>
</feature>
<feature type="active site" description="Proton acceptor" evidence="1">
    <location>
        <position position="91"/>
    </location>
</feature>
<feature type="binding site" evidence="1">
    <location>
        <begin position="92"/>
        <end position="93"/>
    </location>
    <ligand>
        <name>substrate</name>
    </ligand>
</feature>
<feature type="binding site" evidence="1">
    <location>
        <begin position="256"/>
        <end position="257"/>
    </location>
    <ligand>
        <name>substrate</name>
    </ligand>
</feature>
<name>T3HPD_AZOBR</name>
<comment type="function">
    <text evidence="2">Catalyzes the dehydration of trans-3-hydroxy-L-proline (t3LHyp) to Delta(1)-pyrroline-2-carboxylate (Pyr2C). Together with LhpI, is involved in a t3LHyp degradation pathway to L-proline, which allows A.brasilense to grow on t3LHyp as a sole carbon source.</text>
</comment>
<comment type="catalytic activity">
    <reaction evidence="2">
        <text>trans-3-hydroxy-L-proline = 1-pyrroline-2-carboxylate + H2O</text>
        <dbReference type="Rhea" id="RHEA:10320"/>
        <dbReference type="ChEBI" id="CHEBI:15377"/>
        <dbReference type="ChEBI" id="CHEBI:39785"/>
        <dbReference type="ChEBI" id="CHEBI:57938"/>
        <dbReference type="EC" id="4.2.1.77"/>
    </reaction>
</comment>
<comment type="biophysicochemical properties">
    <phDependence>
        <text evidence="2">Optimum pH is 8.0-9.5.</text>
    </phDependence>
</comment>
<comment type="pathway">
    <text evidence="2">Amino-acid degradation.</text>
</comment>
<comment type="subunit">
    <text evidence="2">Homodimer.</text>
</comment>
<comment type="induction">
    <text evidence="2">Induced by T3LHyp, D-proline and D-lysine, but not by trans-4-hydroxy-L-proline (T4LHyp) and L-proline.</text>
</comment>
<comment type="similarity">
    <text evidence="4">Belongs to the proline racemase family.</text>
</comment>
<dbReference type="EC" id="4.2.1.77" evidence="2"/>
<dbReference type="EMBL" id="AB894494">
    <property type="protein sequence ID" value="BAO21621.1"/>
    <property type="molecule type" value="Genomic_DNA"/>
</dbReference>
<dbReference type="SMR" id="V5YXI5"/>
<dbReference type="BioCyc" id="MetaCyc:MONOMER-18702"/>
<dbReference type="BRENDA" id="4.2.1.77">
    <property type="organism ID" value="611"/>
</dbReference>
<dbReference type="GO" id="GO:0050346">
    <property type="term" value="F:trans-L-3-hydroxyproline dehydratase activity"/>
    <property type="evidence" value="ECO:0007669"/>
    <property type="project" value="UniProtKB-EC"/>
</dbReference>
<dbReference type="FunFam" id="3.10.310.10:FF:000029">
    <property type="entry name" value="Trans-3-hydroxy-L-proline dehydratase"/>
    <property type="match status" value="1"/>
</dbReference>
<dbReference type="Gene3D" id="3.10.310.10">
    <property type="entry name" value="Diaminopimelate Epimerase, Chain A, domain 1"/>
    <property type="match status" value="2"/>
</dbReference>
<dbReference type="InterPro" id="IPR053425">
    <property type="entry name" value="Hydroxyproline_Metab_Enz"/>
</dbReference>
<dbReference type="InterPro" id="IPR008794">
    <property type="entry name" value="Pro_racemase_fam"/>
</dbReference>
<dbReference type="NCBIfam" id="NF045511">
    <property type="entry name" value="TransHydProDhtase"/>
    <property type="match status" value="1"/>
</dbReference>
<dbReference type="PANTHER" id="PTHR33442">
    <property type="entry name" value="TRANS-3-HYDROXY-L-PROLINE DEHYDRATASE"/>
    <property type="match status" value="1"/>
</dbReference>
<dbReference type="PANTHER" id="PTHR33442:SF1">
    <property type="entry name" value="TRANS-3-HYDROXY-L-PROLINE DEHYDRATASE"/>
    <property type="match status" value="1"/>
</dbReference>
<dbReference type="Pfam" id="PF05544">
    <property type="entry name" value="Pro_racemase"/>
    <property type="match status" value="1"/>
</dbReference>
<dbReference type="PIRSF" id="PIRSF029792">
    <property type="entry name" value="Pro_racemase"/>
    <property type="match status" value="1"/>
</dbReference>
<dbReference type="SFLD" id="SFLDS00028">
    <property type="entry name" value="Proline_Racemase"/>
    <property type="match status" value="1"/>
</dbReference>
<dbReference type="SUPFAM" id="SSF54506">
    <property type="entry name" value="Diaminopimelate epimerase-like"/>
    <property type="match status" value="1"/>
</dbReference>
<reference key="1">
    <citation type="journal article" date="2014" name="FEBS Open Bio">
        <title>Identification and characterization of trans-3-hydroxy-L-proline dehydratase and Delta(1)-pyrroline-2-carboxylate reductase involved in trans-3-hydroxy-L-proline metabolism of bacteria.</title>
        <authorList>
            <person name="Watanabe S."/>
            <person name="Tanimoto Y."/>
            <person name="Yamauchi S."/>
            <person name="Tozawa Y."/>
            <person name="Sawayama S."/>
            <person name="Watanabe Y."/>
        </authorList>
    </citation>
    <scope>NUCLEOTIDE SEQUENCE [GENOMIC DNA]</scope>
    <scope>FUNCTION</scope>
    <scope>CATALYTIC ACTIVITY</scope>
    <scope>SUBUNIT</scope>
    <scope>BIOPHYSICOCHEMICAL PROPERTIES</scope>
    <scope>INDUCTION</scope>
    <scope>PATHWAY</scope>
    <source>
        <strain>ATCC 29145 / DSM 1690 / IMET 11303 / Sp7</strain>
    </source>
</reference>
<sequence>MKITRSLSTVEVHTGGEAFRIVTSGLPRAPGDTIVQRRAWLKENADEIRRALMFEPRGHADMYGGYLTEPVSPNADFGVIFVHNEGYSDHCGHGVIALSTAAVELGWVQRTVPETRVGIDAPCGFIEAFVKWDGEHAGPVRFVNVPSFIWQRDVSVETPSFGTVTGDIAYGGAFYFYVDGAPFDLPVREAAVEKLIRFGAEVKAAANAKYPVVHPEIPEINHIYGTIIANAPRHPGSTQANCCVFADREVDRSPTGSGTGGRVAQLYQRGLLAAGDTLVNESIVGTVFKGRVLRETTVGDIPAVIPEVEGSAHICGFANWIVDERDPLTYGFLVR</sequence>
<organism>
    <name type="scientific">Azospirillum brasilense</name>
    <dbReference type="NCBI Taxonomy" id="192"/>
    <lineage>
        <taxon>Bacteria</taxon>
        <taxon>Pseudomonadati</taxon>
        <taxon>Pseudomonadota</taxon>
        <taxon>Alphaproteobacteria</taxon>
        <taxon>Rhodospirillales</taxon>
        <taxon>Azospirillaceae</taxon>
        <taxon>Azospirillum</taxon>
    </lineage>
</organism>
<gene>
    <name evidence="3" type="primary">lhpH</name>
</gene>
<evidence type="ECO:0000250" key="1">
    <source>
        <dbReference type="UniProtKB" id="Q4KGU2"/>
    </source>
</evidence>
<evidence type="ECO:0000269" key="2">
    <source>
    </source>
</evidence>
<evidence type="ECO:0000303" key="3">
    <source>
    </source>
</evidence>
<evidence type="ECO:0000305" key="4"/>
<keyword id="KW-0456">Lyase</keyword>